<sequence>MIKFLSALILLLVTTAAQAERIRDLTSVQGVRQNSLIGYGLVVGLDGTGDQTTQTPFTTQTLNNMLSQLGITVPTGTNMQLKNVAAVMVTASLPPFGRQGQTIDVVVSSMGNAKSLRGGTLLMTPLKGVDSQVYALAQGNILVGGAGASAGGSSVQVNQLNGGRITNGAVIERELPSQFGVGNTLNLQLNDEDFSMAQQIADTINRVRGYGSATALDARTIQVRVPSGNSSQVRFLADIQNMQVNVTPQDAKVVINSRTGSVVMNREVTLDSCAVAQGNLSVTVNRQANVSQPDTPFGGGQTVVTPQTQIDLRQSGGSLQSVRSSASLNNVVRALNALGATPMDLMSILQSMQSAGCLRAKLEII</sequence>
<organism>
    <name type="scientific">Escherichia coli (strain K12 / MC4100 / BW2952)</name>
    <dbReference type="NCBI Taxonomy" id="595496"/>
    <lineage>
        <taxon>Bacteria</taxon>
        <taxon>Pseudomonadati</taxon>
        <taxon>Pseudomonadota</taxon>
        <taxon>Gammaproteobacteria</taxon>
        <taxon>Enterobacterales</taxon>
        <taxon>Enterobacteriaceae</taxon>
        <taxon>Escherichia</taxon>
    </lineage>
</organism>
<name>FLGI_ECOBW</name>
<keyword id="KW-0975">Bacterial flagellum</keyword>
<keyword id="KW-0574">Periplasm</keyword>
<keyword id="KW-0732">Signal</keyword>
<feature type="signal peptide" evidence="1">
    <location>
        <begin position="1"/>
        <end position="19"/>
    </location>
</feature>
<feature type="chain" id="PRO_1000206021" description="Flagellar P-ring protein">
    <location>
        <begin position="20"/>
        <end position="365"/>
    </location>
</feature>
<dbReference type="EMBL" id="CP001396">
    <property type="protein sequence ID" value="ACR64411.1"/>
    <property type="molecule type" value="Genomic_DNA"/>
</dbReference>
<dbReference type="RefSeq" id="WP_000589326.1">
    <property type="nucleotide sequence ID" value="NC_012759.1"/>
</dbReference>
<dbReference type="SMR" id="C4ZS20"/>
<dbReference type="GeneID" id="75203667"/>
<dbReference type="KEGG" id="ebw:BWG_0928"/>
<dbReference type="HOGENOM" id="CLU_045235_1_0_6"/>
<dbReference type="GO" id="GO:0009428">
    <property type="term" value="C:bacterial-type flagellum basal body, distal rod, P ring"/>
    <property type="evidence" value="ECO:0007669"/>
    <property type="project" value="InterPro"/>
</dbReference>
<dbReference type="GO" id="GO:0030288">
    <property type="term" value="C:outer membrane-bounded periplasmic space"/>
    <property type="evidence" value="ECO:0007669"/>
    <property type="project" value="InterPro"/>
</dbReference>
<dbReference type="GO" id="GO:0005198">
    <property type="term" value="F:structural molecule activity"/>
    <property type="evidence" value="ECO:0007669"/>
    <property type="project" value="InterPro"/>
</dbReference>
<dbReference type="GO" id="GO:0071973">
    <property type="term" value="P:bacterial-type flagellum-dependent cell motility"/>
    <property type="evidence" value="ECO:0007669"/>
    <property type="project" value="InterPro"/>
</dbReference>
<dbReference type="HAMAP" id="MF_00416">
    <property type="entry name" value="FlgI"/>
    <property type="match status" value="1"/>
</dbReference>
<dbReference type="InterPro" id="IPR001782">
    <property type="entry name" value="Flag_FlgI"/>
</dbReference>
<dbReference type="NCBIfam" id="NF003676">
    <property type="entry name" value="PRK05303.1"/>
    <property type="match status" value="1"/>
</dbReference>
<dbReference type="PANTHER" id="PTHR30381">
    <property type="entry name" value="FLAGELLAR P-RING PERIPLASMIC PROTEIN FLGI"/>
    <property type="match status" value="1"/>
</dbReference>
<dbReference type="PANTHER" id="PTHR30381:SF0">
    <property type="entry name" value="FLAGELLAR P-RING PROTEIN"/>
    <property type="match status" value="1"/>
</dbReference>
<dbReference type="Pfam" id="PF02119">
    <property type="entry name" value="FlgI"/>
    <property type="match status" value="1"/>
</dbReference>
<dbReference type="PRINTS" id="PR01010">
    <property type="entry name" value="FLGPRINGFLGI"/>
</dbReference>
<proteinExistence type="inferred from homology"/>
<comment type="function">
    <text evidence="1">Assembles around the rod to form the L-ring and probably protects the motor/basal body from shearing forces during rotation.</text>
</comment>
<comment type="subunit">
    <text evidence="1">The basal body constitutes a major portion of the flagellar organelle and consists of four rings (L,P,S, and M) mounted on a central rod.</text>
</comment>
<comment type="subcellular location">
    <subcellularLocation>
        <location evidence="1">Periplasm</location>
    </subcellularLocation>
    <subcellularLocation>
        <location evidence="1">Bacterial flagellum basal body</location>
    </subcellularLocation>
</comment>
<comment type="similarity">
    <text evidence="1">Belongs to the FlgI family.</text>
</comment>
<gene>
    <name evidence="1" type="primary">flgI</name>
    <name type="ordered locus">BWG_0928</name>
</gene>
<accession>C4ZS20</accession>
<protein>
    <recommendedName>
        <fullName evidence="1">Flagellar P-ring protein</fullName>
    </recommendedName>
    <alternativeName>
        <fullName evidence="1">Basal body P-ring protein</fullName>
    </alternativeName>
</protein>
<evidence type="ECO:0000255" key="1">
    <source>
        <dbReference type="HAMAP-Rule" id="MF_00416"/>
    </source>
</evidence>
<reference key="1">
    <citation type="journal article" date="2009" name="J. Bacteriol.">
        <title>Genomic sequencing reveals regulatory mutations and recombinational events in the widely used MC4100 lineage of Escherichia coli K-12.</title>
        <authorList>
            <person name="Ferenci T."/>
            <person name="Zhou Z."/>
            <person name="Betteridge T."/>
            <person name="Ren Y."/>
            <person name="Liu Y."/>
            <person name="Feng L."/>
            <person name="Reeves P.R."/>
            <person name="Wang L."/>
        </authorList>
    </citation>
    <scope>NUCLEOTIDE SEQUENCE [LARGE SCALE GENOMIC DNA]</scope>
    <source>
        <strain>K12 / MC4100 / BW2952</strain>
    </source>
</reference>